<name>POSA_ACIB3</name>
<keyword id="KW-0002">3D-structure</keyword>
<keyword id="KW-1003">Cell membrane</keyword>
<keyword id="KW-0436">Ligase</keyword>
<keyword id="KW-0472">Membrane</keyword>
<keyword id="KW-0596">Phosphopantetheine</keyword>
<keyword id="KW-0597">Phosphoprotein</keyword>
<keyword id="KW-0812">Transmembrane</keyword>
<keyword id="KW-1133">Transmembrane helix</keyword>
<organism>
    <name type="scientific">Acinetobacter baumannii (strain AB307-0294)</name>
    <dbReference type="NCBI Taxonomy" id="557600"/>
    <lineage>
        <taxon>Bacteria</taxon>
        <taxon>Pseudomonadati</taxon>
        <taxon>Pseudomonadota</taxon>
        <taxon>Gammaproteobacteria</taxon>
        <taxon>Moraxellales</taxon>
        <taxon>Moraxellaceae</taxon>
        <taxon>Acinetobacter</taxon>
        <taxon>Acinetobacter calcoaceticus/baumannii complex</taxon>
    </lineage>
</organism>
<protein>
    <recommendedName>
        <fullName evidence="4">Delta-poly-L-ornithine synthetase</fullName>
        <shortName evidence="4">Delta-POs</shortName>
        <ecNumber evidence="3">6.3.-.-</ecNumber>
    </recommendedName>
</protein>
<sequence>MNQFVTNTKNVIRGKYHPEFLQNEVLADIFAHTAQTLPDKTALIEADKTLSYGELYQQALIMAQHLALKGVKPGHIVGLWLPRGIELLKAQLAICLSGAAWLPFDMDTPADRIAVCLEDAEAVGMITTDEWYEHLAEVPQTKWTNTELQKPLSESVSLAKTTPDQPAYIIYTSGSTGKPKGIVITQKNICHFLRSENSILGIQEQDKVYQGFSVAFDMSFEEIWLSYLVGATLWIAPKSLVSDPERLCQTLKQEQITVLHAVPTLLALFPEDVPNLRIINLGGEMCPDSLVDRWALPHHQMFNTYGPTETTVSASLELLERGKPVTIGKPLPNYGMLVINSERELLEQGETGELCIFGPSVAQGYLGRPDLTADKFIENPWAMSVEEELLYRTGDLAKIDEFGQVHCLGRADDQVKIRGFRVELGEIEAALCDIDGIGTAAVILRPEDGIDQLIAFIAPEIDAKQAIEIKELRHNLSQRLPPYMVPNRFEIIEEVPRLLSGKIDRKALKARPLTSVVDRSESDQPQNPAEEILFEILNRLFPNMPIKLDSDFFDDLGGHSLLAAVLISNLREHAEYSHLTIQNLYQARRVGAIAALMLEQPEPTLFDSQIGQDNPRNQTYKWLCGIAQLVTIPVLISINILQWLAPFFTYHYFTGGTRDSIPYAIALSLLVYVSVIMSSFVLSITVKRLLMLGIGAGRYPLWGLTYFRWWLADRISNISPVYLLSGSTLLNLYLKALGAKIGHDVTISSVHIRMPSLLTIEDGVSIGSQVNLENAKVEHGHLVLGSIHLKQDSYVGSYAVLEENTVLEKQAHVNALTSIEYDTVVPEGEIWDGTPAQKIGHIDEQAKLPERPKLSFIRKIAEYGYYGVSALIIACLFFIPIFPSFLLVDWLDVNVFNINPNNHLQIALYYFILAIPASAMMMMITAVISSGLRKIALPRLEIGTYAVHGSTYYRKWFAAQILETSLQTLHGLFATIYAPTWFRMLGAKVGKNTEISTATGVIPEMLTLGEESFIADAVMLGDEEIKGGWMSLKATKIGNRSFVGNSAYIADGTVLPDNVLIGVQSKTPDNREMYDGQTWFGSPALLLPAREAAEKYPDHLTFKPSIKRRLMRGFIEGLRIVLPAALAIGVGYMIVLDVIDVINNYNIETGLVALTLAGLLYGVGCFLIVALLKWILIGRYQPRSAPMWTMFVWLSEGITSLYESVAIPNFLNYLRGTPMLPFFLRILGVRIGKDVYMDTADITEFDCVSIGDRAEFNSFSGPQTHLFEDRIMKIGQVNVGNDVVVNTRSIILYNANVSNHAVLGPLTLVMKGENIPAKSAWIGSPAVPWVHK</sequence>
<comment type="function">
    <text evidence="3">Catalyzes the polymerization of L-ornithine, generating poly-L-ornithine composed of 7-12 amino acid units joined via isopeptide bonds between the carboxylate and the side chain amine. This polymer exhibits potent antifungal activity and thus may have a potential role in survival benefit for A.baumannii. The reaction occurs via ATP-dependent adenylation of the substrate. Can also adenylate D-ornithine with similar efficiency and thus may produce D-ornithine polymers.</text>
</comment>
<comment type="catalytic activity">
    <reaction evidence="3">
        <text>n L-ornithine + n ATP + H2O = N(5)-(L-ornithyl)-[N(5)-(L-ornithyl)]n-1 + n AMP + n diphosphate + n H(+)</text>
        <dbReference type="Rhea" id="RHEA:80023"/>
        <dbReference type="Rhea" id="RHEA-COMP:19361"/>
        <dbReference type="ChEBI" id="CHEBI:15377"/>
        <dbReference type="ChEBI" id="CHEBI:15378"/>
        <dbReference type="ChEBI" id="CHEBI:30616"/>
        <dbReference type="ChEBI" id="CHEBI:33019"/>
        <dbReference type="ChEBI" id="CHEBI:46911"/>
        <dbReference type="ChEBI" id="CHEBI:231429"/>
        <dbReference type="ChEBI" id="CHEBI:456215"/>
    </reaction>
    <physiologicalReaction direction="left-to-right" evidence="6">
        <dbReference type="Rhea" id="RHEA:80024"/>
    </physiologicalReaction>
</comment>
<comment type="catalytic activity">
    <reaction evidence="6">
        <text>n D-ornithine + n ATP + H2O = N(5)-(D-ornithyl)-[N(5)-(D-ornithyl)]n-1 + n AMP + n diphosphate + n H(+)</text>
        <dbReference type="Rhea" id="RHEA:80027"/>
        <dbReference type="Rhea" id="RHEA-COMP:19352"/>
        <dbReference type="ChEBI" id="CHEBI:15377"/>
        <dbReference type="ChEBI" id="CHEBI:15378"/>
        <dbReference type="ChEBI" id="CHEBI:30616"/>
        <dbReference type="ChEBI" id="CHEBI:33019"/>
        <dbReference type="ChEBI" id="CHEBI:57668"/>
        <dbReference type="ChEBI" id="CHEBI:231430"/>
        <dbReference type="ChEBI" id="CHEBI:456215"/>
    </reaction>
    <physiologicalReaction direction="left-to-right" evidence="6">
        <dbReference type="Rhea" id="RHEA:80028"/>
    </physiologicalReaction>
</comment>
<comment type="cofactor">
    <cofactor evidence="2">
        <name>pantetheine 4'-phosphate</name>
        <dbReference type="ChEBI" id="CHEBI:47942"/>
    </cofactor>
</comment>
<comment type="biophysicochemical properties">
    <kinetics>
        <KM evidence="3">0.24 mM for L-ornithine</KM>
        <KM evidence="3">0.45 mM for D-ornithine</KM>
        <KM evidence="3">8.59 mM for L-lysine</KM>
        <text evidence="3">Kinetic assays were performed with a truncated protein (adenylation domain, residues 1-512). kcat is 0.129 sec(-1) for adenylation of L-ornithine. kcat is 0.113 sec(-1) for adenylation of D-ornithine. kcat is 0.028 sec(-1) for adenylation of L-lysine. But the full-length protein does not produce lysine polymers.</text>
    </kinetics>
</comment>
<comment type="subcellular location">
    <subcellularLocation>
        <location evidence="1">Cell membrane</location>
        <topology evidence="1">Multi-pass membrane protein</topology>
    </subcellularLocation>
</comment>
<comment type="domain">
    <text evidence="6">Consists of three domains: an N-terminal adenylation domain, a carrier domain with pantetheinylation motif, and a C-terminal transmembrane domain.</text>
</comment>
<comment type="disruption phenotype">
    <text evidence="3">Cells lacking this gene show a similar growth as wild-type in static or shaken cultures but show slightly higher biofilm formation.</text>
</comment>
<comment type="similarity">
    <text evidence="5">Belongs to the ATP-dependent AMP-binding enzyme family.</text>
</comment>
<accession>A0A5K6CNB8</accession>
<evidence type="ECO:0000255" key="1"/>
<evidence type="ECO:0000255" key="2">
    <source>
        <dbReference type="PROSITE-ProRule" id="PRU00258"/>
    </source>
</evidence>
<evidence type="ECO:0000269" key="3">
    <source>
    </source>
</evidence>
<evidence type="ECO:0000303" key="4">
    <source>
    </source>
</evidence>
<evidence type="ECO:0000305" key="5"/>
<evidence type="ECO:0000305" key="6">
    <source>
    </source>
</evidence>
<evidence type="ECO:0000312" key="7">
    <source>
        <dbReference type="EMBL" id="ATY43264.1"/>
    </source>
</evidence>
<evidence type="ECO:0007744" key="8">
    <source>
        <dbReference type="PDB" id="8G95"/>
    </source>
</evidence>
<evidence type="ECO:0007744" key="9">
    <source>
        <dbReference type="PDB" id="8G96"/>
    </source>
</evidence>
<evidence type="ECO:0007744" key="10">
    <source>
        <dbReference type="PDB" id="8G97"/>
    </source>
</evidence>
<evidence type="ECO:0007744" key="11">
    <source>
        <dbReference type="PDB" id="8G98"/>
    </source>
</evidence>
<evidence type="ECO:0007829" key="12">
    <source>
        <dbReference type="PDB" id="8G95"/>
    </source>
</evidence>
<evidence type="ECO:0007829" key="13">
    <source>
        <dbReference type="PDB" id="8G96"/>
    </source>
</evidence>
<evidence type="ECO:0007829" key="14">
    <source>
        <dbReference type="PDB" id="8G98"/>
    </source>
</evidence>
<reference key="1">
    <citation type="journal article" date="2008" name="J. Bacteriol.">
        <title>Comparative genome sequence analysis of multidrug-resistant Acinetobacter baumannii.</title>
        <authorList>
            <person name="Adams M.D."/>
            <person name="Goglin K."/>
            <person name="Molyneaux N."/>
            <person name="Hujer K.M."/>
            <person name="Lavender H."/>
            <person name="Jamison J.J."/>
            <person name="MacDonald I.J."/>
            <person name="Martin K.M."/>
            <person name="Russo T."/>
            <person name="Campagnari A.A."/>
            <person name="Hujer A.M."/>
            <person name="Bonomo R.A."/>
            <person name="Gill S.R."/>
        </authorList>
    </citation>
    <scope>NUCLEOTIDE SEQUENCE [LARGE SCALE GENOMIC DNA]</scope>
    <source>
        <strain>AB307-0294</strain>
    </source>
</reference>
<reference evidence="8 9 10 11" key="2">
    <citation type="journal article" date="2023" name="Commun. Biol.">
        <title>Structural and functional insights into delta-poly-L-ornithine polymer biosynthesis from Acinetobacter baumannii.</title>
        <authorList>
            <person name="Patel K.D."/>
            <person name="Gulick A.M."/>
        </authorList>
    </citation>
    <scope>X-RAY CRYSTALLOGRAPHY (2.20 ANGSTROMS) OF 1-412 (ADENYLATION DOMAIN) UNLIGANDED AND IN COMPLEXES WITH L-ORN; D-ORN AND L-LYS</scope>
    <scope>FUNCTION</scope>
    <scope>CATALYTIC ACTIVITY</scope>
    <scope>BIOPHYSICOCHEMICAL PROPERTIES</scope>
    <scope>SUBSTRATE SPECIFICITY</scope>
    <scope>MUTAGENESIS OF ASP-217; MET-218; GLU-221; THR-304 AND SER-313</scope>
    <scope>DISRUPTION PHENOTYPE</scope>
    <scope>DOMAIN</scope>
    <source>
        <strain>AB307-0294</strain>
    </source>
</reference>
<gene>
    <name evidence="4" type="primary">posA</name>
    <name evidence="7" type="synonym">dhbF_1</name>
    <name evidence="7" type="ORF">ABBFA_00818</name>
</gene>
<proteinExistence type="evidence at protein level"/>
<dbReference type="EC" id="6.3.-.-" evidence="3"/>
<dbReference type="EMBL" id="CP001172">
    <property type="protein sequence ID" value="ATY43264.1"/>
    <property type="molecule type" value="Genomic_DNA"/>
</dbReference>
<dbReference type="RefSeq" id="WP_001071462.1">
    <property type="nucleotide sequence ID" value="NZ_CP001172.1"/>
</dbReference>
<dbReference type="PDB" id="8G95">
    <property type="method" value="X-ray"/>
    <property type="resolution" value="2.20 A"/>
    <property type="chains" value="A/B=1-412"/>
</dbReference>
<dbReference type="PDB" id="8G96">
    <property type="method" value="X-ray"/>
    <property type="resolution" value="2.30 A"/>
    <property type="chains" value="A/B=1-412"/>
</dbReference>
<dbReference type="PDB" id="8G97">
    <property type="method" value="X-ray"/>
    <property type="resolution" value="2.51 A"/>
    <property type="chains" value="A/B=1-411"/>
</dbReference>
<dbReference type="PDB" id="8G98">
    <property type="method" value="X-ray"/>
    <property type="resolution" value="2.49 A"/>
    <property type="chains" value="A/B=1-411"/>
</dbReference>
<dbReference type="PDBsum" id="8G95"/>
<dbReference type="PDBsum" id="8G96"/>
<dbReference type="PDBsum" id="8G97"/>
<dbReference type="PDBsum" id="8G98"/>
<dbReference type="SMR" id="A0A5K6CNB8"/>
<dbReference type="KEGG" id="abb:ABBFA_00818"/>
<dbReference type="Proteomes" id="UP000006924">
    <property type="component" value="Chromosome"/>
</dbReference>
<dbReference type="GO" id="GO:0005737">
    <property type="term" value="C:cytoplasm"/>
    <property type="evidence" value="ECO:0007669"/>
    <property type="project" value="TreeGrafter"/>
</dbReference>
<dbReference type="GO" id="GO:0005886">
    <property type="term" value="C:plasma membrane"/>
    <property type="evidence" value="ECO:0007669"/>
    <property type="project" value="UniProtKB-SubCell"/>
</dbReference>
<dbReference type="GO" id="GO:0016874">
    <property type="term" value="F:ligase activity"/>
    <property type="evidence" value="ECO:0007669"/>
    <property type="project" value="UniProtKB-KW"/>
</dbReference>
<dbReference type="GO" id="GO:0031177">
    <property type="term" value="F:phosphopantetheine binding"/>
    <property type="evidence" value="ECO:0007669"/>
    <property type="project" value="TreeGrafter"/>
</dbReference>
<dbReference type="GO" id="GO:0043041">
    <property type="term" value="P:amino acid activation for nonribosomal peptide biosynthetic process"/>
    <property type="evidence" value="ECO:0007669"/>
    <property type="project" value="TreeGrafter"/>
</dbReference>
<dbReference type="GO" id="GO:0044550">
    <property type="term" value="P:secondary metabolite biosynthetic process"/>
    <property type="evidence" value="ECO:0007669"/>
    <property type="project" value="TreeGrafter"/>
</dbReference>
<dbReference type="CDD" id="cd05930">
    <property type="entry name" value="A_NRPS"/>
    <property type="match status" value="1"/>
</dbReference>
<dbReference type="Gene3D" id="3.30.300.30">
    <property type="match status" value="1"/>
</dbReference>
<dbReference type="Gene3D" id="1.10.1200.10">
    <property type="entry name" value="ACP-like"/>
    <property type="match status" value="1"/>
</dbReference>
<dbReference type="Gene3D" id="2.160.10.10">
    <property type="entry name" value="Hexapeptide repeat proteins"/>
    <property type="match status" value="3"/>
</dbReference>
<dbReference type="Gene3D" id="3.40.50.12780">
    <property type="entry name" value="N-terminal domain of ligase-like"/>
    <property type="match status" value="1"/>
</dbReference>
<dbReference type="InterPro" id="IPR010071">
    <property type="entry name" value="AA_adenyl_dom"/>
</dbReference>
<dbReference type="InterPro" id="IPR036736">
    <property type="entry name" value="ACP-like_sf"/>
</dbReference>
<dbReference type="InterPro" id="IPR025110">
    <property type="entry name" value="AMP-bd_C"/>
</dbReference>
<dbReference type="InterPro" id="IPR045851">
    <property type="entry name" value="AMP-bd_C_sf"/>
</dbReference>
<dbReference type="InterPro" id="IPR020845">
    <property type="entry name" value="AMP-binding_CS"/>
</dbReference>
<dbReference type="InterPro" id="IPR000873">
    <property type="entry name" value="AMP-dep_synth/lig_dom"/>
</dbReference>
<dbReference type="InterPro" id="IPR042099">
    <property type="entry name" value="ANL_N_sf"/>
</dbReference>
<dbReference type="InterPro" id="IPR012728">
    <property type="entry name" value="Pls/PosA_C"/>
</dbReference>
<dbReference type="InterPro" id="IPR009081">
    <property type="entry name" value="PP-bd_ACP"/>
</dbReference>
<dbReference type="InterPro" id="IPR011004">
    <property type="entry name" value="Trimer_LpxA-like_sf"/>
</dbReference>
<dbReference type="NCBIfam" id="TIGR01733">
    <property type="entry name" value="AA-adenyl-dom"/>
    <property type="match status" value="1"/>
</dbReference>
<dbReference type="NCBIfam" id="TIGR02353">
    <property type="entry name" value="NRPS_term_dom"/>
    <property type="match status" value="1"/>
</dbReference>
<dbReference type="PANTHER" id="PTHR45527:SF1">
    <property type="entry name" value="FATTY ACID SYNTHASE"/>
    <property type="match status" value="1"/>
</dbReference>
<dbReference type="PANTHER" id="PTHR45527">
    <property type="entry name" value="NONRIBOSOMAL PEPTIDE SYNTHETASE"/>
    <property type="match status" value="1"/>
</dbReference>
<dbReference type="Pfam" id="PF00501">
    <property type="entry name" value="AMP-binding"/>
    <property type="match status" value="1"/>
</dbReference>
<dbReference type="Pfam" id="PF13193">
    <property type="entry name" value="AMP-binding_C"/>
    <property type="match status" value="1"/>
</dbReference>
<dbReference type="Pfam" id="PF00550">
    <property type="entry name" value="PP-binding"/>
    <property type="match status" value="1"/>
</dbReference>
<dbReference type="SUPFAM" id="SSF56801">
    <property type="entry name" value="Acetyl-CoA synthetase-like"/>
    <property type="match status" value="1"/>
</dbReference>
<dbReference type="SUPFAM" id="SSF47336">
    <property type="entry name" value="ACP-like"/>
    <property type="match status" value="1"/>
</dbReference>
<dbReference type="SUPFAM" id="SSF51161">
    <property type="entry name" value="Trimeric LpxA-like enzymes"/>
    <property type="match status" value="3"/>
</dbReference>
<dbReference type="PROSITE" id="PS00455">
    <property type="entry name" value="AMP_BINDING"/>
    <property type="match status" value="1"/>
</dbReference>
<dbReference type="PROSITE" id="PS50075">
    <property type="entry name" value="CARRIER"/>
    <property type="match status" value="1"/>
</dbReference>
<feature type="chain" id="PRO_0000460851" description="Delta-poly-L-ornithine synthetase">
    <location>
        <begin position="1"/>
        <end position="1332"/>
    </location>
</feature>
<feature type="transmembrane region" description="Helical" evidence="1">
    <location>
        <begin position="629"/>
        <end position="649"/>
    </location>
</feature>
<feature type="transmembrane region" description="Helical" evidence="1">
    <location>
        <begin position="664"/>
        <end position="684"/>
    </location>
</feature>
<feature type="transmembrane region" description="Helical" evidence="1">
    <location>
        <begin position="868"/>
        <end position="888"/>
    </location>
</feature>
<feature type="transmembrane region" description="Helical" evidence="1">
    <location>
        <begin position="908"/>
        <end position="928"/>
    </location>
</feature>
<feature type="transmembrane region" description="Helical" evidence="1">
    <location>
        <begin position="1120"/>
        <end position="1140"/>
    </location>
</feature>
<feature type="transmembrane region" description="Helical" evidence="1">
    <location>
        <begin position="1151"/>
        <end position="1171"/>
    </location>
</feature>
<feature type="domain" description="Carrier" evidence="2">
    <location>
        <begin position="524"/>
        <end position="601"/>
    </location>
</feature>
<feature type="binding site" evidence="3 9">
    <location>
        <position position="217"/>
    </location>
    <ligand>
        <name>L-ornithine</name>
        <dbReference type="ChEBI" id="CHEBI:46911"/>
    </ligand>
</feature>
<feature type="binding site" evidence="3 10">
    <location>
        <position position="221"/>
    </location>
    <ligand>
        <name>D-ornithine</name>
        <dbReference type="ChEBI" id="CHEBI:57668"/>
    </ligand>
</feature>
<feature type="binding site" evidence="3 9">
    <location>
        <position position="221"/>
    </location>
    <ligand>
        <name>L-ornithine</name>
        <dbReference type="ChEBI" id="CHEBI:46911"/>
    </ligand>
</feature>
<feature type="binding site" evidence="3 10">
    <location>
        <position position="304"/>
    </location>
    <ligand>
        <name>D-ornithine</name>
        <dbReference type="ChEBI" id="CHEBI:57668"/>
    </ligand>
</feature>
<feature type="binding site" evidence="3 9">
    <location>
        <position position="304"/>
    </location>
    <ligand>
        <name>L-ornithine</name>
        <dbReference type="ChEBI" id="CHEBI:46911"/>
    </ligand>
</feature>
<feature type="binding site" evidence="3 10">
    <location>
        <position position="306"/>
    </location>
    <ligand>
        <name>D-ornithine</name>
        <dbReference type="ChEBI" id="CHEBI:57668"/>
    </ligand>
</feature>
<feature type="binding site" evidence="3 10">
    <location>
        <position position="308"/>
    </location>
    <ligand>
        <name>D-ornithine</name>
        <dbReference type="ChEBI" id="CHEBI:57668"/>
    </ligand>
</feature>
<feature type="binding site" evidence="3 9">
    <location>
        <position position="312"/>
    </location>
    <ligand>
        <name>L-ornithine</name>
        <dbReference type="ChEBI" id="CHEBI:46911"/>
    </ligand>
</feature>
<feature type="binding site" evidence="3 10">
    <location>
        <position position="313"/>
    </location>
    <ligand>
        <name>D-ornithine</name>
        <dbReference type="ChEBI" id="CHEBI:57668"/>
    </ligand>
</feature>
<feature type="binding site" evidence="3 9">
    <location>
        <position position="313"/>
    </location>
    <ligand>
        <name>L-ornithine</name>
        <dbReference type="ChEBI" id="CHEBI:46911"/>
    </ligand>
</feature>
<feature type="site" description="Important for substrate specificity" evidence="3">
    <location>
        <position position="218"/>
    </location>
</feature>
<feature type="modified residue" description="O-(pantetheine 4'-phosphoryl)serine" evidence="2">
    <location>
        <position position="560"/>
    </location>
</feature>
<feature type="mutagenesis site" description="Loss of amino acid adenylation activity." evidence="3">
    <original>D</original>
    <variation>A</variation>
    <location>
        <position position="217"/>
    </location>
</feature>
<feature type="mutagenesis site" description="Minimal impact on catalytic efficiency for L-Orn adenylation but 10-fold increase in catalytic efficiency for L-lys adenylation." evidence="3">
    <original>M</original>
    <variation>A</variation>
    <location>
        <position position="218"/>
    </location>
</feature>
<feature type="mutagenesis site" description="Loss of amino acid adenylation activity." evidence="3">
    <original>E</original>
    <variation>A</variation>
    <location>
        <position position="221"/>
    </location>
</feature>
<feature type="mutagenesis site" description="High decrease in substrate affinity." evidence="3">
    <original>T</original>
    <variation>A</variation>
    <location>
        <position position="304"/>
    </location>
</feature>
<feature type="mutagenesis site" description="High decrease in substrate affinity." evidence="3">
    <original>S</original>
    <variation>A</variation>
    <location>
        <position position="313"/>
    </location>
</feature>
<feature type="strand" evidence="13">
    <location>
        <begin position="9"/>
        <end position="13"/>
    </location>
</feature>
<feature type="helix" evidence="12">
    <location>
        <begin position="18"/>
        <end position="20"/>
    </location>
</feature>
<feature type="helix" evidence="12">
    <location>
        <begin position="26"/>
        <end position="36"/>
    </location>
</feature>
<feature type="strand" evidence="12">
    <location>
        <begin position="40"/>
        <end position="45"/>
    </location>
</feature>
<feature type="strand" evidence="12">
    <location>
        <begin position="48"/>
        <end position="51"/>
    </location>
</feature>
<feature type="helix" evidence="12">
    <location>
        <begin position="52"/>
        <end position="68"/>
    </location>
</feature>
<feature type="strand" evidence="12">
    <location>
        <begin position="76"/>
        <end position="79"/>
    </location>
</feature>
<feature type="helix" evidence="12">
    <location>
        <begin position="85"/>
        <end position="96"/>
    </location>
</feature>
<feature type="strand" evidence="12">
    <location>
        <begin position="100"/>
        <end position="103"/>
    </location>
</feature>
<feature type="helix" evidence="12">
    <location>
        <begin position="110"/>
        <end position="120"/>
    </location>
</feature>
<feature type="strand" evidence="12">
    <location>
        <begin position="123"/>
        <end position="127"/>
    </location>
</feature>
<feature type="helix" evidence="12">
    <location>
        <begin position="129"/>
        <end position="132"/>
    </location>
</feature>
<feature type="helix" evidence="13">
    <location>
        <begin position="133"/>
        <end position="135"/>
    </location>
</feature>
<feature type="strand" evidence="12">
    <location>
        <begin position="142"/>
        <end position="144"/>
    </location>
</feature>
<feature type="helix" evidence="12">
    <location>
        <begin position="147"/>
        <end position="149"/>
    </location>
</feature>
<feature type="strand" evidence="12">
    <location>
        <begin position="165"/>
        <end position="171"/>
    </location>
</feature>
<feature type="strand" evidence="14">
    <location>
        <begin position="175"/>
        <end position="177"/>
    </location>
</feature>
<feature type="strand" evidence="12">
    <location>
        <begin position="181"/>
        <end position="185"/>
    </location>
</feature>
<feature type="helix" evidence="12">
    <location>
        <begin position="186"/>
        <end position="200"/>
    </location>
</feature>
<feature type="strand" evidence="12">
    <location>
        <begin position="207"/>
        <end position="210"/>
    </location>
</feature>
<feature type="helix" evidence="12">
    <location>
        <begin position="217"/>
        <end position="229"/>
    </location>
</feature>
<feature type="strand" evidence="12">
    <location>
        <begin position="232"/>
        <end position="235"/>
    </location>
</feature>
<feature type="helix" evidence="12">
    <location>
        <begin position="238"/>
        <end position="241"/>
    </location>
</feature>
<feature type="helix" evidence="12">
    <location>
        <begin position="244"/>
        <end position="253"/>
    </location>
</feature>
<feature type="strand" evidence="12">
    <location>
        <begin position="258"/>
        <end position="261"/>
    </location>
</feature>
<feature type="helix" evidence="12">
    <location>
        <begin position="263"/>
        <end position="267"/>
    </location>
</feature>
<feature type="strand" evidence="12">
    <location>
        <begin position="278"/>
        <end position="281"/>
    </location>
</feature>
<feature type="helix" evidence="12">
    <location>
        <begin position="288"/>
        <end position="294"/>
    </location>
</feature>
<feature type="strand" evidence="12">
    <location>
        <begin position="300"/>
        <end position="305"/>
    </location>
</feature>
<feature type="helix" evidence="12">
    <location>
        <begin position="308"/>
        <end position="310"/>
    </location>
</feature>
<feature type="strand" evidence="12">
    <location>
        <begin position="314"/>
        <end position="318"/>
    </location>
</feature>
<feature type="strand" evidence="12">
    <location>
        <begin position="335"/>
        <end position="339"/>
    </location>
</feature>
<feature type="strand" evidence="12">
    <location>
        <begin position="352"/>
        <end position="358"/>
    </location>
</feature>
<feature type="helix" evidence="12">
    <location>
        <begin position="369"/>
        <end position="375"/>
    </location>
</feature>
<feature type="strand" evidence="12">
    <location>
        <begin position="376"/>
        <end position="378"/>
    </location>
</feature>
<feature type="helix" evidence="12">
    <location>
        <begin position="385"/>
        <end position="387"/>
    </location>
</feature>
<feature type="strand" evidence="12">
    <location>
        <begin position="388"/>
        <end position="399"/>
    </location>
</feature>
<feature type="strand" evidence="12">
    <location>
        <begin position="405"/>
        <end position="410"/>
    </location>
</feature>